<dbReference type="EMBL" id="AE016823">
    <property type="protein sequence ID" value="AAS70306.1"/>
    <property type="molecule type" value="Genomic_DNA"/>
</dbReference>
<dbReference type="RefSeq" id="WP_001156251.1">
    <property type="nucleotide sequence ID" value="NC_005823.1"/>
</dbReference>
<dbReference type="SMR" id="Q72RM8"/>
<dbReference type="GeneID" id="61141613"/>
<dbReference type="KEGG" id="lic:LIC_11717"/>
<dbReference type="HOGENOM" id="CLU_001370_0_2_12"/>
<dbReference type="Proteomes" id="UP000007037">
    <property type="component" value="Chromosome I"/>
</dbReference>
<dbReference type="GO" id="GO:0005737">
    <property type="term" value="C:cytoplasm"/>
    <property type="evidence" value="ECO:0007669"/>
    <property type="project" value="UniProtKB-SubCell"/>
</dbReference>
<dbReference type="GO" id="GO:0009380">
    <property type="term" value="C:excinuclease repair complex"/>
    <property type="evidence" value="ECO:0007669"/>
    <property type="project" value="InterPro"/>
</dbReference>
<dbReference type="GO" id="GO:0005524">
    <property type="term" value="F:ATP binding"/>
    <property type="evidence" value="ECO:0007669"/>
    <property type="project" value="UniProtKB-UniRule"/>
</dbReference>
<dbReference type="GO" id="GO:0016887">
    <property type="term" value="F:ATP hydrolysis activity"/>
    <property type="evidence" value="ECO:0007669"/>
    <property type="project" value="InterPro"/>
</dbReference>
<dbReference type="GO" id="GO:0003677">
    <property type="term" value="F:DNA binding"/>
    <property type="evidence" value="ECO:0007669"/>
    <property type="project" value="UniProtKB-UniRule"/>
</dbReference>
<dbReference type="GO" id="GO:0009381">
    <property type="term" value="F:excinuclease ABC activity"/>
    <property type="evidence" value="ECO:0007669"/>
    <property type="project" value="UniProtKB-UniRule"/>
</dbReference>
<dbReference type="GO" id="GO:0008270">
    <property type="term" value="F:zinc ion binding"/>
    <property type="evidence" value="ECO:0007669"/>
    <property type="project" value="UniProtKB-UniRule"/>
</dbReference>
<dbReference type="GO" id="GO:0006289">
    <property type="term" value="P:nucleotide-excision repair"/>
    <property type="evidence" value="ECO:0007669"/>
    <property type="project" value="UniProtKB-UniRule"/>
</dbReference>
<dbReference type="GO" id="GO:0009432">
    <property type="term" value="P:SOS response"/>
    <property type="evidence" value="ECO:0007669"/>
    <property type="project" value="UniProtKB-UniRule"/>
</dbReference>
<dbReference type="CDD" id="cd03270">
    <property type="entry name" value="ABC_UvrA_I"/>
    <property type="match status" value="1"/>
</dbReference>
<dbReference type="CDD" id="cd03271">
    <property type="entry name" value="ABC_UvrA_II"/>
    <property type="match status" value="1"/>
</dbReference>
<dbReference type="FunFam" id="1.20.1580.10:FF:000002">
    <property type="entry name" value="UvrABC system protein A"/>
    <property type="match status" value="1"/>
</dbReference>
<dbReference type="Gene3D" id="1.10.8.280">
    <property type="entry name" value="ABC transporter ATPase domain-like"/>
    <property type="match status" value="1"/>
</dbReference>
<dbReference type="Gene3D" id="1.20.1580.10">
    <property type="entry name" value="ABC transporter ATPase like domain"/>
    <property type="match status" value="2"/>
</dbReference>
<dbReference type="Gene3D" id="3.30.1490.20">
    <property type="entry name" value="ATP-grasp fold, A domain"/>
    <property type="match status" value="1"/>
</dbReference>
<dbReference type="Gene3D" id="3.40.50.300">
    <property type="entry name" value="P-loop containing nucleotide triphosphate hydrolases"/>
    <property type="match status" value="2"/>
</dbReference>
<dbReference type="HAMAP" id="MF_00205">
    <property type="entry name" value="UvrA"/>
    <property type="match status" value="1"/>
</dbReference>
<dbReference type="InterPro" id="IPR003593">
    <property type="entry name" value="AAA+_ATPase"/>
</dbReference>
<dbReference type="InterPro" id="IPR003439">
    <property type="entry name" value="ABC_transporter-like_ATP-bd"/>
</dbReference>
<dbReference type="InterPro" id="IPR017871">
    <property type="entry name" value="ABC_transporter-like_CS"/>
</dbReference>
<dbReference type="InterPro" id="IPR013815">
    <property type="entry name" value="ATP_grasp_subdomain_1"/>
</dbReference>
<dbReference type="InterPro" id="IPR027417">
    <property type="entry name" value="P-loop_NTPase"/>
</dbReference>
<dbReference type="InterPro" id="IPR004602">
    <property type="entry name" value="UvrA"/>
</dbReference>
<dbReference type="InterPro" id="IPR041552">
    <property type="entry name" value="UvrA_DNA-bd"/>
</dbReference>
<dbReference type="InterPro" id="IPR041102">
    <property type="entry name" value="UvrA_inter"/>
</dbReference>
<dbReference type="NCBIfam" id="NF001503">
    <property type="entry name" value="PRK00349.1"/>
    <property type="match status" value="1"/>
</dbReference>
<dbReference type="NCBIfam" id="TIGR00630">
    <property type="entry name" value="uvra"/>
    <property type="match status" value="1"/>
</dbReference>
<dbReference type="PANTHER" id="PTHR43152">
    <property type="entry name" value="UVRABC SYSTEM PROTEIN A"/>
    <property type="match status" value="1"/>
</dbReference>
<dbReference type="PANTHER" id="PTHR43152:SF3">
    <property type="entry name" value="UVRABC SYSTEM PROTEIN A"/>
    <property type="match status" value="1"/>
</dbReference>
<dbReference type="Pfam" id="PF17755">
    <property type="entry name" value="UvrA_DNA-bind"/>
    <property type="match status" value="1"/>
</dbReference>
<dbReference type="Pfam" id="PF17760">
    <property type="entry name" value="UvrA_inter"/>
    <property type="match status" value="1"/>
</dbReference>
<dbReference type="SMART" id="SM00382">
    <property type="entry name" value="AAA"/>
    <property type="match status" value="1"/>
</dbReference>
<dbReference type="SUPFAM" id="SSF52540">
    <property type="entry name" value="P-loop containing nucleoside triphosphate hydrolases"/>
    <property type="match status" value="2"/>
</dbReference>
<dbReference type="PROSITE" id="PS00211">
    <property type="entry name" value="ABC_TRANSPORTER_1"/>
    <property type="match status" value="2"/>
</dbReference>
<dbReference type="PROSITE" id="PS50893">
    <property type="entry name" value="ABC_TRANSPORTER_2"/>
    <property type="match status" value="1"/>
</dbReference>
<protein>
    <recommendedName>
        <fullName evidence="1">UvrABC system protein A</fullName>
        <shortName evidence="1">UvrA protein</shortName>
    </recommendedName>
    <alternativeName>
        <fullName evidence="1">Excinuclease ABC subunit A</fullName>
    </alternativeName>
</protein>
<evidence type="ECO:0000255" key="1">
    <source>
        <dbReference type="HAMAP-Rule" id="MF_00205"/>
    </source>
</evidence>
<organism>
    <name type="scientific">Leptospira interrogans serogroup Icterohaemorrhagiae serovar copenhageni (strain Fiocruz L1-130)</name>
    <dbReference type="NCBI Taxonomy" id="267671"/>
    <lineage>
        <taxon>Bacteria</taxon>
        <taxon>Pseudomonadati</taxon>
        <taxon>Spirochaetota</taxon>
        <taxon>Spirochaetia</taxon>
        <taxon>Leptospirales</taxon>
        <taxon>Leptospiraceae</taxon>
        <taxon>Leptospira</taxon>
    </lineage>
</organism>
<proteinExistence type="inferred from homology"/>
<name>UVRA_LEPIC</name>
<gene>
    <name evidence="1" type="primary">uvrA</name>
    <name type="ordered locus">LIC_11717</name>
</gene>
<keyword id="KW-0067">ATP-binding</keyword>
<keyword id="KW-0963">Cytoplasm</keyword>
<keyword id="KW-0227">DNA damage</keyword>
<keyword id="KW-0228">DNA excision</keyword>
<keyword id="KW-0234">DNA repair</keyword>
<keyword id="KW-0238">DNA-binding</keyword>
<keyword id="KW-0267">Excision nuclease</keyword>
<keyword id="KW-0479">Metal-binding</keyword>
<keyword id="KW-0547">Nucleotide-binding</keyword>
<keyword id="KW-0677">Repeat</keyword>
<keyword id="KW-0742">SOS response</keyword>
<keyword id="KW-0862">Zinc</keyword>
<keyword id="KW-0863">Zinc-finger</keyword>
<comment type="function">
    <text evidence="1">The UvrABC repair system catalyzes the recognition and processing of DNA lesions. UvrA is an ATPase and a DNA-binding protein. A damage recognition complex composed of 2 UvrA and 2 UvrB subunits scans DNA for abnormalities. When the presence of a lesion has been verified by UvrB, the UvrA molecules dissociate.</text>
</comment>
<comment type="subunit">
    <text evidence="1">Forms a heterotetramer with UvrB during the search for lesions.</text>
</comment>
<comment type="subcellular location">
    <subcellularLocation>
        <location evidence="1">Cytoplasm</location>
    </subcellularLocation>
</comment>
<comment type="similarity">
    <text evidence="1">Belongs to the ABC transporter superfamily. UvrA family.</text>
</comment>
<feature type="chain" id="PRO_0000093058" description="UvrABC system protein A">
    <location>
        <begin position="1"/>
        <end position="948"/>
    </location>
</feature>
<feature type="domain" description="ABC transporter 1" evidence="1">
    <location>
        <begin position="307"/>
        <end position="586"/>
    </location>
</feature>
<feature type="domain" description="ABC transporter 2" evidence="1">
    <location>
        <begin position="606"/>
        <end position="934"/>
    </location>
</feature>
<feature type="zinc finger region" description="C4-type" evidence="1">
    <location>
        <begin position="249"/>
        <end position="277"/>
    </location>
</feature>
<feature type="zinc finger region" description="C4-type" evidence="1">
    <location>
        <begin position="737"/>
        <end position="763"/>
    </location>
</feature>
<feature type="binding site" evidence="1">
    <location>
        <begin position="31"/>
        <end position="38"/>
    </location>
    <ligand>
        <name>ATP</name>
        <dbReference type="ChEBI" id="CHEBI:30616"/>
    </ligand>
</feature>
<feature type="binding site" evidence="1">
    <location>
        <begin position="638"/>
        <end position="645"/>
    </location>
    <ligand>
        <name>ATP</name>
        <dbReference type="ChEBI" id="CHEBI:30616"/>
    </ligand>
</feature>
<accession>Q72RM8</accession>
<reference key="1">
    <citation type="journal article" date="2004" name="J. Bacteriol.">
        <title>Comparative genomics of two Leptospira interrogans serovars reveals novel insights into physiology and pathogenesis.</title>
        <authorList>
            <person name="Nascimento A.L.T.O."/>
            <person name="Ko A.I."/>
            <person name="Martins E.A.L."/>
            <person name="Monteiro-Vitorello C.B."/>
            <person name="Ho P.L."/>
            <person name="Haake D.A."/>
            <person name="Verjovski-Almeida S."/>
            <person name="Hartskeerl R.A."/>
            <person name="Marques M.V."/>
            <person name="Oliveira M.C."/>
            <person name="Menck C.F.M."/>
            <person name="Leite L.C.C."/>
            <person name="Carrer H."/>
            <person name="Coutinho L.L."/>
            <person name="Degrave W.M."/>
            <person name="Dellagostin O.A."/>
            <person name="El-Dorry H."/>
            <person name="Ferro E.S."/>
            <person name="Ferro M.I.T."/>
            <person name="Furlan L.R."/>
            <person name="Gamberini M."/>
            <person name="Giglioti E.A."/>
            <person name="Goes-Neto A."/>
            <person name="Goldman G.H."/>
            <person name="Goldman M.H.S."/>
            <person name="Harakava R."/>
            <person name="Jeronimo S.M.B."/>
            <person name="Junqueira-de-Azevedo I.L.M."/>
            <person name="Kimura E.T."/>
            <person name="Kuramae E.E."/>
            <person name="Lemos E.G.M."/>
            <person name="Lemos M.V.F."/>
            <person name="Marino C.L."/>
            <person name="Nunes L.R."/>
            <person name="de Oliveira R.C."/>
            <person name="Pereira G.G."/>
            <person name="Reis M.S."/>
            <person name="Schriefer A."/>
            <person name="Siqueira W.J."/>
            <person name="Sommer P."/>
            <person name="Tsai S.M."/>
            <person name="Simpson A.J.G."/>
            <person name="Ferro J.A."/>
            <person name="Camargo L.E.A."/>
            <person name="Kitajima J.P."/>
            <person name="Setubal J.C."/>
            <person name="Van Sluys M.A."/>
        </authorList>
    </citation>
    <scope>NUCLEOTIDE SEQUENCE [LARGE SCALE GENOMIC DNA]</scope>
    <source>
        <strain>Fiocruz L1-130</strain>
    </source>
</reference>
<sequence>MQEIRIRGAREHNLKNINVDIPRDQLVVITGLSGSGKSSLAFDTIYAEGQRRYVESLSAYARQFLGQMEKPDLDLIEGLSPAISIEQKTTHRNPRSTVGTVTEIYDYLRLLYARVGKPHCPECGTPIQSMSIDQITARVLAFPQGSKLQILAPVISGKKGEHKDVLEKIRKDGFNRVRINGEIRTLEEEIVLKKNFKTSIEIVVDRIVMKEGIRSRLADSVETALKQSEGLVILDDGSKDHILSQKMACPNGHDIGFTELSPRMFSFNSPYGACETCDGLGSLLEFDEDLLVNDPELSLVDGCIEAWAGSKSNGFWFMATLKSLSDSLKFKMNTPWKDLPEKTRQTILYGDKKIKIEYDFRGANSHYEFTKEYEGVIPNLQRRYKETKSDSMRQWFESYMTNHPCPSCKGKRLKRESLSVKVHNVPVDEFTSYSIEKALNFVQNLKVTGAEEIIAKPILKEIHQRLSFLNDVGVGYLTLERSAGSLSGGEAQRIRLATQIGSRLMGVLYILDEPSIGLHQRDNTKLVSTLKNLRDLGNTVLVVEHDQETMEESDWLIDMGPGAGVHGGSIVCAGTPAEVSKHKNSLTGKYLSGRLKVPIPAKLREGNGSKLQIIGAKENNLKNIDVNIPLGKLVVITGVSGSGKSTLINDILYNAAAHKVMKMKTLAGKHKTIKGFENIDKIINIDQSPIGRTPRSNPATYTGLFTPIREMFAGLEEAKLRGYGPGRFSFNVSGGRCETCEGDGILKIEMHFLPDVYVTCEVCKGKRYNQETLEVRYKGKNIFDVLEMTVEDANQFFENIPIVKRKLETLLEVGLGYIRLGQPATTFSGGEAQRIKLATELSKRPTGKTLYILDEPTTGLHFEDVRRLSEVLHTLVDRGNSMIVIEHNLDVIKQADWIVDMGPEGGDGGGLVIAEGIPKDIAKIKNSYTGQYLKKIFTSSEKISRKTK</sequence>